<feature type="transit peptide" description="Apicoplast" evidence="5">
    <location>
        <begin position="1"/>
        <end position="72"/>
    </location>
</feature>
<feature type="chain" id="PRO_0000415609" description="1-deoxy-D-xylulose 5-phosphate reductoisomerase, apicoplastic">
    <location>
        <begin position="73"/>
        <end position="488"/>
    </location>
</feature>
<feature type="binding site" evidence="1">
    <location>
        <begin position="86"/>
        <end position="89"/>
    </location>
    <ligand>
        <name>NADP(+)</name>
        <dbReference type="ChEBI" id="CHEBI:58349"/>
    </ligand>
</feature>
<feature type="binding site" evidence="1">
    <location>
        <begin position="115"/>
        <end position="117"/>
    </location>
    <ligand>
        <name>NADP(+)</name>
        <dbReference type="ChEBI" id="CHEBI:58349"/>
    </ligand>
</feature>
<feature type="binding site" evidence="2">
    <location>
        <position position="205"/>
    </location>
    <ligand>
        <name>1-deoxy-D-xylulose 5-phosphate</name>
        <dbReference type="ChEBI" id="CHEBI:57792"/>
    </ligand>
</feature>
<feature type="binding site" evidence="1">
    <location>
        <position position="206"/>
    </location>
    <ligand>
        <name>NADP(+)</name>
        <dbReference type="ChEBI" id="CHEBI:58349"/>
    </ligand>
</feature>
<feature type="binding site" evidence="3 4 8 9 10 11 12 13 14 15 16 17 18">
    <location>
        <position position="231"/>
    </location>
    <ligand>
        <name>Mn(2+)</name>
        <dbReference type="ChEBI" id="CHEBI:29035"/>
    </ligand>
</feature>
<feature type="binding site" evidence="2">
    <location>
        <position position="232"/>
    </location>
    <ligand>
        <name>1-deoxy-D-xylulose 5-phosphate</name>
        <dbReference type="ChEBI" id="CHEBI:57792"/>
    </ligand>
</feature>
<feature type="binding site" evidence="2">
    <location>
        <position position="233"/>
    </location>
    <ligand>
        <name>1-deoxy-D-xylulose 5-phosphate</name>
        <dbReference type="ChEBI" id="CHEBI:57792"/>
    </ligand>
</feature>
<feature type="binding site" evidence="3 4 8 9 10 11 12 13 14 15 16 17 18">
    <location>
        <position position="233"/>
    </location>
    <ligand>
        <name>Mn(2+)</name>
        <dbReference type="ChEBI" id="CHEBI:29035"/>
    </ligand>
</feature>
<feature type="binding site" evidence="2">
    <location>
        <position position="270"/>
    </location>
    <ligand>
        <name>1-deoxy-D-xylulose 5-phosphate</name>
        <dbReference type="ChEBI" id="CHEBI:57792"/>
    </ligand>
</feature>
<feature type="binding site" evidence="2">
    <location>
        <position position="293"/>
    </location>
    <ligand>
        <name>1-deoxy-D-xylulose 5-phosphate</name>
        <dbReference type="ChEBI" id="CHEBI:57792"/>
    </ligand>
</feature>
<feature type="binding site" evidence="1">
    <location>
        <position position="299"/>
    </location>
    <ligand>
        <name>NADP(+)</name>
        <dbReference type="ChEBI" id="CHEBI:58349"/>
    </ligand>
</feature>
<feature type="binding site" evidence="2">
    <location>
        <position position="306"/>
    </location>
    <ligand>
        <name>1-deoxy-D-xylulose 5-phosphate</name>
        <dbReference type="ChEBI" id="CHEBI:57792"/>
    </ligand>
</feature>
<feature type="binding site" evidence="2">
    <location>
        <position position="311"/>
    </location>
    <ligand>
        <name>1-deoxy-D-xylulose 5-phosphate</name>
        <dbReference type="ChEBI" id="CHEBI:57792"/>
    </ligand>
</feature>
<feature type="binding site" evidence="2">
    <location>
        <position position="312"/>
    </location>
    <ligand>
        <name>1-deoxy-D-xylulose 5-phosphate</name>
        <dbReference type="ChEBI" id="CHEBI:57792"/>
    </ligand>
</feature>
<feature type="binding site" evidence="2">
    <location>
        <position position="315"/>
    </location>
    <ligand>
        <name>1-deoxy-D-xylulose 5-phosphate</name>
        <dbReference type="ChEBI" id="CHEBI:57792"/>
    </ligand>
</feature>
<feature type="binding site" evidence="3 4 8 9 10 11 12 13 14 15 16 17 18">
    <location>
        <position position="315"/>
    </location>
    <ligand>
        <name>Mn(2+)</name>
        <dbReference type="ChEBI" id="CHEBI:29035"/>
    </ligand>
</feature>
<feature type="strand" evidence="19">
    <location>
        <begin position="78"/>
        <end position="84"/>
    </location>
</feature>
<feature type="helix" evidence="19">
    <location>
        <begin position="88"/>
        <end position="103"/>
    </location>
</feature>
<feature type="strand" evidence="19">
    <location>
        <begin position="107"/>
        <end position="116"/>
    </location>
</feature>
<feature type="helix" evidence="19">
    <location>
        <begin position="118"/>
        <end position="128"/>
    </location>
</feature>
<feature type="strand" evidence="19">
    <location>
        <begin position="131"/>
        <end position="136"/>
    </location>
</feature>
<feature type="helix" evidence="19">
    <location>
        <begin position="138"/>
        <end position="140"/>
    </location>
</feature>
<feature type="helix" evidence="19">
    <location>
        <begin position="141"/>
        <end position="148"/>
    </location>
</feature>
<feature type="strand" evidence="21">
    <location>
        <begin position="151"/>
        <end position="153"/>
    </location>
</feature>
<feature type="strand" evidence="19">
    <location>
        <begin position="157"/>
        <end position="160"/>
    </location>
</feature>
<feature type="helix" evidence="19">
    <location>
        <begin position="161"/>
        <end position="170"/>
    </location>
</feature>
<feature type="strand" evidence="19">
    <location>
        <begin position="176"/>
        <end position="179"/>
    </location>
</feature>
<feature type="helix" evidence="19">
    <location>
        <begin position="184"/>
        <end position="195"/>
    </location>
</feature>
<feature type="strand" evidence="19">
    <location>
        <begin position="199"/>
        <end position="202"/>
    </location>
</feature>
<feature type="helix" evidence="19">
    <location>
        <begin position="205"/>
        <end position="221"/>
    </location>
</feature>
<feature type="strand" evidence="19">
    <location>
        <begin position="226"/>
        <end position="229"/>
    </location>
</feature>
<feature type="helix" evidence="19">
    <location>
        <begin position="232"/>
        <end position="239"/>
    </location>
</feature>
<feature type="helix" evidence="19">
    <location>
        <begin position="243"/>
        <end position="246"/>
    </location>
</feature>
<feature type="strand" evidence="20">
    <location>
        <begin position="251"/>
        <end position="253"/>
    </location>
</feature>
<feature type="helix" evidence="19">
    <location>
        <begin position="256"/>
        <end position="259"/>
    </location>
</feature>
<feature type="strand" evidence="19">
    <location>
        <begin position="262"/>
        <end position="269"/>
    </location>
</feature>
<feature type="turn" evidence="19">
    <location>
        <begin position="273"/>
        <end position="276"/>
    </location>
</feature>
<feature type="helix" evidence="19">
    <location>
        <begin position="279"/>
        <end position="284"/>
    </location>
</feature>
<feature type="helix" evidence="19">
    <location>
        <begin position="287"/>
        <end position="291"/>
    </location>
</feature>
<feature type="helix" evidence="19">
    <location>
        <begin position="300"/>
        <end position="308"/>
    </location>
</feature>
<feature type="helix" evidence="19">
    <location>
        <begin position="310"/>
        <end position="323"/>
    </location>
</feature>
<feature type="helix" evidence="19">
    <location>
        <begin position="327"/>
        <end position="329"/>
    </location>
</feature>
<feature type="strand" evidence="19">
    <location>
        <begin position="330"/>
        <end position="334"/>
    </location>
</feature>
<feature type="strand" evidence="19">
    <location>
        <begin position="340"/>
        <end position="346"/>
    </location>
</feature>
<feature type="strand" evidence="19">
    <location>
        <begin position="351"/>
        <end position="355"/>
    </location>
</feature>
<feature type="helix" evidence="19">
    <location>
        <begin position="361"/>
        <end position="369"/>
    </location>
</feature>
<feature type="helix" evidence="19">
    <location>
        <begin position="383"/>
        <end position="386"/>
    </location>
</feature>
<feature type="strand" evidence="19">
    <location>
        <begin position="388"/>
        <end position="390"/>
    </location>
</feature>
<feature type="turn" evidence="19">
    <location>
        <begin position="396"/>
        <end position="398"/>
    </location>
</feature>
<feature type="helix" evidence="19">
    <location>
        <begin position="400"/>
        <end position="411"/>
    </location>
</feature>
<feature type="helix" evidence="19">
    <location>
        <begin position="415"/>
        <end position="431"/>
    </location>
</feature>
<feature type="helix" evidence="19">
    <location>
        <begin position="437"/>
        <end position="450"/>
    </location>
</feature>
<feature type="helix" evidence="19">
    <location>
        <begin position="460"/>
        <end position="485"/>
    </location>
</feature>
<dbReference type="EC" id="1.1.1.267" evidence="3 4"/>
<dbReference type="EMBL" id="LN999946">
    <property type="protein sequence ID" value="CZU00370.1"/>
    <property type="molecule type" value="Genomic_DNA"/>
</dbReference>
<dbReference type="RefSeq" id="XP_001348815.1">
    <property type="nucleotide sequence ID" value="XM_001348779.1"/>
</dbReference>
<dbReference type="PDB" id="4Y67">
    <property type="method" value="X-ray"/>
    <property type="resolution" value="1.60 A"/>
    <property type="chains" value="A/B=75-488"/>
</dbReference>
<dbReference type="PDB" id="4Y6P">
    <property type="method" value="X-ray"/>
    <property type="resolution" value="1.90 A"/>
    <property type="chains" value="A/B=75-488"/>
</dbReference>
<dbReference type="PDB" id="4Y6R">
    <property type="method" value="X-ray"/>
    <property type="resolution" value="1.90 A"/>
    <property type="chains" value="A/B=75-488"/>
</dbReference>
<dbReference type="PDB" id="4Y6S">
    <property type="method" value="X-ray"/>
    <property type="resolution" value="2.10 A"/>
    <property type="chains" value="A/B=75-488"/>
</dbReference>
<dbReference type="PDB" id="5JAZ">
    <property type="method" value="X-ray"/>
    <property type="resolution" value="1.40 A"/>
    <property type="chains" value="A/B=75-488"/>
</dbReference>
<dbReference type="PDB" id="5JBI">
    <property type="method" value="X-ray"/>
    <property type="resolution" value="1.70 A"/>
    <property type="chains" value="A/B=75-488"/>
</dbReference>
<dbReference type="PDB" id="5JC1">
    <property type="method" value="X-ray"/>
    <property type="resolution" value="1.65 A"/>
    <property type="chains" value="A/B=75-488"/>
</dbReference>
<dbReference type="PDB" id="5JMP">
    <property type="method" value="X-ray"/>
    <property type="resolution" value="1.70 A"/>
    <property type="chains" value="A/B=75-488"/>
</dbReference>
<dbReference type="PDB" id="5JMW">
    <property type="method" value="X-ray"/>
    <property type="resolution" value="1.55 A"/>
    <property type="chains" value="A/B=75-488"/>
</dbReference>
<dbReference type="PDB" id="5JNL">
    <property type="method" value="X-ray"/>
    <property type="resolution" value="1.60 A"/>
    <property type="chains" value="A/B=75-488"/>
</dbReference>
<dbReference type="PDB" id="5JO0">
    <property type="method" value="X-ray"/>
    <property type="resolution" value="1.80 A"/>
    <property type="chains" value="A/B=75-488"/>
</dbReference>
<dbReference type="PDBsum" id="4Y67"/>
<dbReference type="PDBsum" id="4Y6P"/>
<dbReference type="PDBsum" id="4Y6R"/>
<dbReference type="PDBsum" id="4Y6S"/>
<dbReference type="PDBsum" id="5JAZ"/>
<dbReference type="PDBsum" id="5JBI"/>
<dbReference type="PDBsum" id="5JC1"/>
<dbReference type="PDBsum" id="5JMP"/>
<dbReference type="PDBsum" id="5JMW"/>
<dbReference type="PDBsum" id="5JNL"/>
<dbReference type="PDBsum" id="5JO0"/>
<dbReference type="SMR" id="Q8IKG4"/>
<dbReference type="FunCoup" id="Q8IKG4">
    <property type="interactions" value="55"/>
</dbReference>
<dbReference type="STRING" id="36329.Q8IKG4"/>
<dbReference type="BindingDB" id="Q8IKG4"/>
<dbReference type="ChEMBL" id="CHEMBL4295619"/>
<dbReference type="PaxDb" id="5833-PF14_0641"/>
<dbReference type="EnsemblProtists" id="CZU00370">
    <property type="protein sequence ID" value="CZU00370"/>
    <property type="gene ID" value="PF3D7_1467300"/>
</dbReference>
<dbReference type="GeneID" id="812223"/>
<dbReference type="KEGG" id="pfa:PF3D7_1467300"/>
<dbReference type="VEuPathDB" id="PlasmoDB:PF3D7_1467300"/>
<dbReference type="HOGENOM" id="CLU_035714_4_0_1"/>
<dbReference type="InParanoid" id="Q8IKG4"/>
<dbReference type="OMA" id="AHPNWVM"/>
<dbReference type="OrthoDB" id="3482at2759"/>
<dbReference type="PhylomeDB" id="Q8IKG4"/>
<dbReference type="BRENDA" id="1.1.1.267">
    <property type="organism ID" value="4889"/>
</dbReference>
<dbReference type="UniPathway" id="UPA00056">
    <property type="reaction ID" value="UER00092"/>
</dbReference>
<dbReference type="EvolutionaryTrace" id="Q8IKG4"/>
<dbReference type="Proteomes" id="UP000001450">
    <property type="component" value="Chromosome 14"/>
</dbReference>
<dbReference type="GO" id="GO:0020011">
    <property type="term" value="C:apicoplast"/>
    <property type="evidence" value="ECO:0000314"/>
    <property type="project" value="GeneDB"/>
</dbReference>
<dbReference type="GO" id="GO:0030604">
    <property type="term" value="F:1-deoxy-D-xylulose-5-phosphate reductoisomerase activity"/>
    <property type="evidence" value="ECO:0000314"/>
    <property type="project" value="UniProtKB"/>
</dbReference>
<dbReference type="GO" id="GO:0030145">
    <property type="term" value="F:manganese ion binding"/>
    <property type="evidence" value="ECO:0000318"/>
    <property type="project" value="GO_Central"/>
</dbReference>
<dbReference type="GO" id="GO:0070402">
    <property type="term" value="F:NADPH binding"/>
    <property type="evidence" value="ECO:0000318"/>
    <property type="project" value="GO_Central"/>
</dbReference>
<dbReference type="GO" id="GO:0051484">
    <property type="term" value="P:isopentenyl diphosphate biosynthetic process, methylerythritol 4-phosphate pathway involved in terpenoid biosynthetic process"/>
    <property type="evidence" value="ECO:0000318"/>
    <property type="project" value="GO_Central"/>
</dbReference>
<dbReference type="FunFam" id="3.40.50.720:FF:000045">
    <property type="entry name" value="1-deoxy-D-xylulose 5-phosphate reductoisomerase"/>
    <property type="match status" value="1"/>
</dbReference>
<dbReference type="Gene3D" id="1.10.1740.10">
    <property type="match status" value="1"/>
</dbReference>
<dbReference type="Gene3D" id="3.40.50.720">
    <property type="entry name" value="NAD(P)-binding Rossmann-like Domain"/>
    <property type="match status" value="1"/>
</dbReference>
<dbReference type="HAMAP" id="MF_00183">
    <property type="entry name" value="DXP_reductoisom"/>
    <property type="match status" value="1"/>
</dbReference>
<dbReference type="InterPro" id="IPR003821">
    <property type="entry name" value="DXP_reductoisomerase"/>
</dbReference>
<dbReference type="InterPro" id="IPR013644">
    <property type="entry name" value="DXP_reductoisomerase_C"/>
</dbReference>
<dbReference type="InterPro" id="IPR013512">
    <property type="entry name" value="DXP_reductoisomerase_N"/>
</dbReference>
<dbReference type="InterPro" id="IPR026877">
    <property type="entry name" value="DXPR_C"/>
</dbReference>
<dbReference type="InterPro" id="IPR036169">
    <property type="entry name" value="DXPR_C_sf"/>
</dbReference>
<dbReference type="InterPro" id="IPR036291">
    <property type="entry name" value="NAD(P)-bd_dom_sf"/>
</dbReference>
<dbReference type="NCBIfam" id="TIGR00243">
    <property type="entry name" value="Dxr"/>
    <property type="match status" value="1"/>
</dbReference>
<dbReference type="PANTHER" id="PTHR30525">
    <property type="entry name" value="1-DEOXY-D-XYLULOSE 5-PHOSPHATE REDUCTOISOMERASE"/>
    <property type="match status" value="1"/>
</dbReference>
<dbReference type="PANTHER" id="PTHR30525:SF0">
    <property type="entry name" value="1-DEOXY-D-XYLULOSE 5-PHOSPHATE REDUCTOISOMERASE, CHLOROPLASTIC"/>
    <property type="match status" value="1"/>
</dbReference>
<dbReference type="Pfam" id="PF08436">
    <property type="entry name" value="DXP_redisom_C"/>
    <property type="match status" value="1"/>
</dbReference>
<dbReference type="Pfam" id="PF02670">
    <property type="entry name" value="DXP_reductoisom"/>
    <property type="match status" value="1"/>
</dbReference>
<dbReference type="Pfam" id="PF13288">
    <property type="entry name" value="DXPR_C"/>
    <property type="match status" value="1"/>
</dbReference>
<dbReference type="SUPFAM" id="SSF69055">
    <property type="entry name" value="1-deoxy-D-xylulose-5-phosphate reductoisomerase, C-terminal domain"/>
    <property type="match status" value="1"/>
</dbReference>
<dbReference type="SUPFAM" id="SSF55347">
    <property type="entry name" value="Glyceraldehyde-3-phosphate dehydrogenase-like, C-terminal domain"/>
    <property type="match status" value="1"/>
</dbReference>
<dbReference type="SUPFAM" id="SSF51735">
    <property type="entry name" value="NAD(P)-binding Rossmann-fold domains"/>
    <property type="match status" value="1"/>
</dbReference>
<organism>
    <name type="scientific">Plasmodium falciparum (isolate 3D7)</name>
    <dbReference type="NCBI Taxonomy" id="36329"/>
    <lineage>
        <taxon>Eukaryota</taxon>
        <taxon>Sar</taxon>
        <taxon>Alveolata</taxon>
        <taxon>Apicomplexa</taxon>
        <taxon>Aconoidasida</taxon>
        <taxon>Haemosporida</taxon>
        <taxon>Plasmodiidae</taxon>
        <taxon>Plasmodium</taxon>
        <taxon>Plasmodium (Laverania)</taxon>
    </lineage>
</organism>
<sequence length="488" mass="55757">MKKYIYIYFFFITITINDLVINNTSKCVSIERRKNNAYINYGIGYNGPDNKITKSRRCKRIKLCKKDLIDIGAIKKPINVAIFGSTGSIGTNALNIIRECNKIENVFNVKALYVNKSVNELYEQAREFLPEYLCIHDKSVYEELKELVKNIKDYKPIILCGDEGMKEICSSNSIDKIVIGIDSFQGLYSTMYAIMNNKIVALANKESIVSAGFFLKKLLNIHKNAKIIPVDSEHSAIFQCLDNNKVLKTKCLQDNFSKINNINKIFLCSSGGPFQNLTMDELKNVTSENALKHPKWKMGKKITIDSATMMNKGLEVIETHFLFDVDYNDIEVIVHKECIIHSCVEFIDKSVISQMYYPDMQIPILYSLTWPDRIKTNLKPLDLAQVSTLTFHKPSLEHFPCIKLAYQAGIKGNFYPTVLNASNEIANNLFLNNKIKYFDISSIISQVLESFNSQKVSENSEDLMKQILQIHSWAKDKATDIYNKHNSS</sequence>
<protein>
    <recommendedName>
        <fullName>1-deoxy-D-xylulose 5-phosphate reductoisomerase, apicoplastic</fullName>
        <shortName>1-deoxyxylulose-5-phosphate reductoisomerase</shortName>
        <shortName>DOXP reductoisomerase</shortName>
        <shortName>DXP reductoisomerase</shortName>
        <ecNumber evidence="3 4">1.1.1.267</ecNumber>
    </recommendedName>
</protein>
<evidence type="ECO:0000250" key="1">
    <source>
        <dbReference type="UniProtKB" id="O96693"/>
    </source>
</evidence>
<evidence type="ECO:0000250" key="2">
    <source>
        <dbReference type="UniProtKB" id="P45568"/>
    </source>
</evidence>
<evidence type="ECO:0000269" key="3">
    <source>
    </source>
</evidence>
<evidence type="ECO:0000269" key="4">
    <source>
    </source>
</evidence>
<evidence type="ECO:0000305" key="5"/>
<evidence type="ECO:0000305" key="6">
    <source>
    </source>
</evidence>
<evidence type="ECO:0000305" key="7">
    <source>
    </source>
</evidence>
<evidence type="ECO:0007744" key="8">
    <source>
        <dbReference type="PDB" id="4Y67"/>
    </source>
</evidence>
<evidence type="ECO:0007744" key="9">
    <source>
        <dbReference type="PDB" id="4Y6P"/>
    </source>
</evidence>
<evidence type="ECO:0007744" key="10">
    <source>
        <dbReference type="PDB" id="4Y6R"/>
    </source>
</evidence>
<evidence type="ECO:0007744" key="11">
    <source>
        <dbReference type="PDB" id="4Y6S"/>
    </source>
</evidence>
<evidence type="ECO:0007744" key="12">
    <source>
        <dbReference type="PDB" id="5JAZ"/>
    </source>
</evidence>
<evidence type="ECO:0007744" key="13">
    <source>
        <dbReference type="PDB" id="5JBI"/>
    </source>
</evidence>
<evidence type="ECO:0007744" key="14">
    <source>
        <dbReference type="PDB" id="5JC1"/>
    </source>
</evidence>
<evidence type="ECO:0007744" key="15">
    <source>
        <dbReference type="PDB" id="5JMP"/>
    </source>
</evidence>
<evidence type="ECO:0007744" key="16">
    <source>
        <dbReference type="PDB" id="5JMW"/>
    </source>
</evidence>
<evidence type="ECO:0007744" key="17">
    <source>
        <dbReference type="PDB" id="5JNL"/>
    </source>
</evidence>
<evidence type="ECO:0007744" key="18">
    <source>
        <dbReference type="PDB" id="5JO0"/>
    </source>
</evidence>
<evidence type="ECO:0007829" key="19">
    <source>
        <dbReference type="PDB" id="5JAZ"/>
    </source>
</evidence>
<evidence type="ECO:0007829" key="20">
    <source>
        <dbReference type="PDB" id="5JMW"/>
    </source>
</evidence>
<evidence type="ECO:0007829" key="21">
    <source>
        <dbReference type="PDB" id="5JNL"/>
    </source>
</evidence>
<name>DXR_PLAF7</name>
<reference key="1">
    <citation type="journal article" date="2002" name="Nature">
        <title>Genome sequence of the human malaria parasite Plasmodium falciparum.</title>
        <authorList>
            <person name="Gardner M.J."/>
            <person name="Hall N."/>
            <person name="Fung E."/>
            <person name="White O."/>
            <person name="Berriman M."/>
            <person name="Hyman R.W."/>
            <person name="Carlton J.M."/>
            <person name="Pain A."/>
            <person name="Nelson K.E."/>
            <person name="Bowman S."/>
            <person name="Paulsen I.T."/>
            <person name="James K.D."/>
            <person name="Eisen J.A."/>
            <person name="Rutherford K.M."/>
            <person name="Salzberg S.L."/>
            <person name="Craig A."/>
            <person name="Kyes S."/>
            <person name="Chan M.-S."/>
            <person name="Nene V."/>
            <person name="Shallom S.J."/>
            <person name="Suh B."/>
            <person name="Peterson J."/>
            <person name="Angiuoli S."/>
            <person name="Pertea M."/>
            <person name="Allen J."/>
            <person name="Selengut J."/>
            <person name="Haft D."/>
            <person name="Mather M.W."/>
            <person name="Vaidya A.B."/>
            <person name="Martin D.M.A."/>
            <person name="Fairlamb A.H."/>
            <person name="Fraunholz M.J."/>
            <person name="Roos D.S."/>
            <person name="Ralph S.A."/>
            <person name="McFadden G.I."/>
            <person name="Cummings L.M."/>
            <person name="Subramanian G.M."/>
            <person name="Mungall C."/>
            <person name="Venter J.C."/>
            <person name="Carucci D.J."/>
            <person name="Hoffman S.L."/>
            <person name="Newbold C."/>
            <person name="Davis R.W."/>
            <person name="Fraser C.M."/>
            <person name="Barrell B.G."/>
        </authorList>
    </citation>
    <scope>NUCLEOTIDE SEQUENCE [LARGE SCALE GENOMIC DNA]</scope>
    <source>
        <strain>3D7</strain>
    </source>
</reference>
<reference evidence="8 9 10 11" key="2">
    <citation type="journal article" date="2015" name="J. Med. Chem.">
        <title>Synthesis and bioactivity of beta-substituted fosmidomycin analogues targeting 1-deoxy-D-xylulose-5-phosphate reductoisomerase.</title>
        <authorList>
            <person name="Chofor R."/>
            <person name="Sooriyaarachchi S."/>
            <person name="Risseeuw M.D."/>
            <person name="Bergfors T."/>
            <person name="Pouyez J."/>
            <person name="Johny C."/>
            <person name="Haymond A."/>
            <person name="Everaert A."/>
            <person name="Dowd C.S."/>
            <person name="Maes L."/>
            <person name="Coenye T."/>
            <person name="Alex A."/>
            <person name="Couch R.D."/>
            <person name="Jones T.A."/>
            <person name="Wouters J."/>
            <person name="Mowbray S.L."/>
            <person name="Van Calenbergh S."/>
        </authorList>
    </citation>
    <scope>X-RAY CRYSTALLOGRAPHY (1.60 ANGSTROMS) OF 75-488 IN COMPLEX WITH MANGANESE AND INHIBITORS</scope>
    <scope>CATALYTIC ACTIVITY</scope>
    <scope>COFACTOR</scope>
    <scope>ACTIVITY REGULATION</scope>
    <scope>PATHWAY</scope>
</reference>
<reference evidence="12 13 14 15 16 17 18" key="3">
    <citation type="journal article" date="2016" name="ChemMedChem">
        <title>Targeting an Aromatic Hotspot in Plasmodium falciparum 1-Deoxy-d-xylulose-5-phosphate Reductoisomerase with beta-Arylpropyl Analogues of Fosmidomycin.</title>
        <authorList>
            <person name="Sooriyaarachchi S."/>
            <person name="Chofor R."/>
            <person name="Risseeuw M.D."/>
            <person name="Bergfors T."/>
            <person name="Pouyez J."/>
            <person name="Dowd C.S."/>
            <person name="Maes L."/>
            <person name="Wouters J."/>
            <person name="Jones T.A."/>
            <person name="Van Calenbergh S."/>
            <person name="Mowbray S.L."/>
        </authorList>
    </citation>
    <scope>X-RAY CRYSTALLOGRAPHY (1.40 ANGSTROMS) OF 75-488 IN COMPLEX WITH MANGANESE</scope>
    <scope>FUNCTION</scope>
    <scope>CATALYTIC ACTIVITY</scope>
    <scope>COFACTOR</scope>
    <scope>ACTIVITY REGULATION</scope>
    <scope>PATHWAY</scope>
    <scope>SUBUNIT</scope>
</reference>
<gene>
    <name type="primary">DXR</name>
    <name type="ORF">PF14_0641</name>
    <name type="ORF">PF3D7_1467300</name>
</gene>
<accession>Q8IKG4</accession>
<accession>A0A144A2T4</accession>
<comment type="function">
    <text evidence="3 4">Catalyzes the NADPH-dependent rearrangement and reduction of 1-deoxy-D-xylulose-5-phosphate (DXP) to 2-C-methyl-D-erythritol 4-phosphate (MEP).</text>
</comment>
<comment type="catalytic activity">
    <reaction evidence="3 4">
        <text>2-C-methyl-D-erythritol 4-phosphate + NADP(+) = 1-deoxy-D-xylulose 5-phosphate + NADPH + H(+)</text>
        <dbReference type="Rhea" id="RHEA:13717"/>
        <dbReference type="ChEBI" id="CHEBI:15378"/>
        <dbReference type="ChEBI" id="CHEBI:57783"/>
        <dbReference type="ChEBI" id="CHEBI:57792"/>
        <dbReference type="ChEBI" id="CHEBI:58262"/>
        <dbReference type="ChEBI" id="CHEBI:58349"/>
        <dbReference type="EC" id="1.1.1.267"/>
    </reaction>
    <physiologicalReaction direction="right-to-left" evidence="6 7">
        <dbReference type="Rhea" id="RHEA:13719"/>
    </physiologicalReaction>
</comment>
<comment type="cofactor">
    <cofactor evidence="1">
        <name>Mg(2+)</name>
        <dbReference type="ChEBI" id="CHEBI:18420"/>
    </cofactor>
    <cofactor evidence="3 4">
        <name>Mn(2+)</name>
        <dbReference type="ChEBI" id="CHEBI:29035"/>
    </cofactor>
    <text evidence="3 4">Binds 1 divalent cation per subunit. Mg(2+) or Mn(2+).</text>
</comment>
<comment type="activity regulation">
    <text evidence="3 4">Inhibited by fosmidomycin and its derivatives.</text>
</comment>
<comment type="pathway">
    <text evidence="6 7">Isoprenoid biosynthesis; isopentenyl diphosphate biosynthesis via DXP pathway; isopentenyl diphosphate from 1-deoxy-D-xylulose 5-phosphate: step 1/6.</text>
</comment>
<comment type="subunit">
    <text evidence="6 7">Homodimer.</text>
</comment>
<comment type="subcellular location">
    <subcellularLocation>
        <location evidence="1">Plastid</location>
        <location evidence="1">Apicoplast</location>
    </subcellularLocation>
</comment>
<comment type="similarity">
    <text evidence="5">Belongs to the DXR family.</text>
</comment>
<keyword id="KW-0002">3D-structure</keyword>
<keyword id="KW-0933">Apicoplast</keyword>
<keyword id="KW-0414">Isoprene biosynthesis</keyword>
<keyword id="KW-0460">Magnesium</keyword>
<keyword id="KW-0464">Manganese</keyword>
<keyword id="KW-0479">Metal-binding</keyword>
<keyword id="KW-0521">NADP</keyword>
<keyword id="KW-0560">Oxidoreductase</keyword>
<keyword id="KW-0934">Plastid</keyword>
<keyword id="KW-1185">Reference proteome</keyword>
<keyword id="KW-0809">Transit peptide</keyword>
<proteinExistence type="evidence at protein level"/>